<proteinExistence type="evidence at protein level"/>
<accession>F1LMN3</accession>
<accession>Q4FZV5</accession>
<feature type="chain" id="PRO_0000420709" description="Transcription factor E2F8">
    <location>
        <begin position="1"/>
        <end position="860"/>
    </location>
</feature>
<feature type="DNA-binding region" evidence="3">
    <location>
        <begin position="112"/>
        <end position="181"/>
    </location>
</feature>
<feature type="DNA-binding region" evidence="3">
    <location>
        <begin position="261"/>
        <end position="347"/>
    </location>
</feature>
<feature type="region of interest" description="Disordered" evidence="4">
    <location>
        <begin position="1"/>
        <end position="114"/>
    </location>
</feature>
<feature type="region of interest" description="Disordered" evidence="4">
    <location>
        <begin position="407"/>
        <end position="433"/>
    </location>
</feature>
<feature type="region of interest" description="Disordered" evidence="4">
    <location>
        <begin position="533"/>
        <end position="616"/>
    </location>
</feature>
<feature type="compositionally biased region" description="Basic and acidic residues" evidence="4">
    <location>
        <begin position="74"/>
        <end position="84"/>
    </location>
</feature>
<feature type="compositionally biased region" description="Basic and acidic residues" evidence="4">
    <location>
        <begin position="92"/>
        <end position="114"/>
    </location>
</feature>
<feature type="compositionally biased region" description="Low complexity" evidence="4">
    <location>
        <begin position="411"/>
        <end position="426"/>
    </location>
</feature>
<feature type="compositionally biased region" description="Polar residues" evidence="4">
    <location>
        <begin position="542"/>
        <end position="554"/>
    </location>
</feature>
<feature type="compositionally biased region" description="Basic and acidic residues" evidence="4">
    <location>
        <begin position="555"/>
        <end position="565"/>
    </location>
</feature>
<feature type="compositionally biased region" description="Basic and acidic residues" evidence="4">
    <location>
        <begin position="586"/>
        <end position="596"/>
    </location>
</feature>
<feature type="modified residue" description="Phosphoserine" evidence="7">
    <location>
        <position position="71"/>
    </location>
</feature>
<feature type="modified residue" description="Phosphoserine" evidence="2">
    <location>
        <position position="412"/>
    </location>
</feature>
<feature type="modified residue" description="Phosphoserine" evidence="2">
    <location>
        <position position="416"/>
    </location>
</feature>
<feature type="splice variant" id="VSP_044620" description="In isoform 2." evidence="5">
    <original>K</original>
    <variation>KSSASCR</variation>
    <location>
        <position position="570"/>
    </location>
</feature>
<feature type="splice variant" id="VSP_044621" description="In isoform 2." evidence="5">
    <original>A</original>
    <variation>AASVIP</variation>
    <location>
        <position position="765"/>
    </location>
</feature>
<dbReference type="EMBL" id="BC099080">
    <property type="protein sequence ID" value="AAH99080.1"/>
    <property type="molecule type" value="mRNA"/>
</dbReference>
<dbReference type="SMR" id="F1LMN3"/>
<dbReference type="FunCoup" id="F1LMN3">
    <property type="interactions" value="392"/>
</dbReference>
<dbReference type="STRING" id="10116.ENSRNOP00000036763"/>
<dbReference type="GlyGen" id="F1LMN3">
    <property type="glycosylation" value="2 sites"/>
</dbReference>
<dbReference type="iPTMnet" id="F1LMN3"/>
<dbReference type="PhosphoSitePlus" id="F1LMN3"/>
<dbReference type="PaxDb" id="10116-ENSRNOP00000036763"/>
<dbReference type="UCSC" id="RGD:1308091">
    <property type="organism name" value="rat"/>
</dbReference>
<dbReference type="AGR" id="RGD:1308091"/>
<dbReference type="RGD" id="1308091">
    <property type="gene designation" value="E2f8"/>
</dbReference>
<dbReference type="eggNOG" id="KOG2578">
    <property type="taxonomic scope" value="Eukaryota"/>
</dbReference>
<dbReference type="InParanoid" id="F1LMN3"/>
<dbReference type="TreeFam" id="TF105567"/>
<dbReference type="Reactome" id="R-RNO-6804116">
    <property type="pathway name" value="TP53 Regulates Transcription of Genes Involved in G1 Cell Cycle Arrest"/>
</dbReference>
<dbReference type="PRO" id="PR:F1LMN3"/>
<dbReference type="Proteomes" id="UP000002494">
    <property type="component" value="Unplaced"/>
</dbReference>
<dbReference type="GO" id="GO:0005634">
    <property type="term" value="C:nucleus"/>
    <property type="evidence" value="ECO:0000266"/>
    <property type="project" value="RGD"/>
</dbReference>
<dbReference type="GO" id="GO:0090575">
    <property type="term" value="C:RNA polymerase II transcription regulator complex"/>
    <property type="evidence" value="ECO:0000318"/>
    <property type="project" value="GO_Central"/>
</dbReference>
<dbReference type="GO" id="GO:0000987">
    <property type="term" value="F:cis-regulatory region sequence-specific DNA binding"/>
    <property type="evidence" value="ECO:0000266"/>
    <property type="project" value="RGD"/>
</dbReference>
<dbReference type="GO" id="GO:0003677">
    <property type="term" value="F:DNA binding"/>
    <property type="evidence" value="ECO:0000266"/>
    <property type="project" value="RGD"/>
</dbReference>
<dbReference type="GO" id="GO:0003700">
    <property type="term" value="F:DNA-binding transcription factor activity"/>
    <property type="evidence" value="ECO:0000250"/>
    <property type="project" value="UniProtKB"/>
</dbReference>
<dbReference type="GO" id="GO:0000981">
    <property type="term" value="F:DNA-binding transcription factor activity, RNA polymerase II-specific"/>
    <property type="evidence" value="ECO:0000318"/>
    <property type="project" value="GO_Central"/>
</dbReference>
<dbReference type="GO" id="GO:0001217">
    <property type="term" value="F:DNA-binding transcription repressor activity"/>
    <property type="evidence" value="ECO:0000250"/>
    <property type="project" value="UniProtKB"/>
</dbReference>
<dbReference type="GO" id="GO:0001227">
    <property type="term" value="F:DNA-binding transcription repressor activity, RNA polymerase II-specific"/>
    <property type="evidence" value="ECO:0000266"/>
    <property type="project" value="RGD"/>
</dbReference>
<dbReference type="GO" id="GO:0042802">
    <property type="term" value="F:identical protein binding"/>
    <property type="evidence" value="ECO:0000266"/>
    <property type="project" value="RGD"/>
</dbReference>
<dbReference type="GO" id="GO:0000978">
    <property type="term" value="F:RNA polymerase II cis-regulatory region sequence-specific DNA binding"/>
    <property type="evidence" value="ECO:0000266"/>
    <property type="project" value="RGD"/>
</dbReference>
<dbReference type="GO" id="GO:1990837">
    <property type="term" value="F:sequence-specific double-stranded DNA binding"/>
    <property type="evidence" value="ECO:0000266"/>
    <property type="project" value="RGD"/>
</dbReference>
<dbReference type="GO" id="GO:0033301">
    <property type="term" value="P:cell cycle comprising mitosis without cytokinesis"/>
    <property type="evidence" value="ECO:0000250"/>
    <property type="project" value="UniProtKB"/>
</dbReference>
<dbReference type="GO" id="GO:0060718">
    <property type="term" value="P:chorionic trophoblast cell differentiation"/>
    <property type="evidence" value="ECO:0000250"/>
    <property type="project" value="UniProtKB"/>
</dbReference>
<dbReference type="GO" id="GO:0048144">
    <property type="term" value="P:fibroblast proliferation"/>
    <property type="evidence" value="ECO:0000266"/>
    <property type="project" value="RGD"/>
</dbReference>
<dbReference type="GO" id="GO:0070365">
    <property type="term" value="P:hepatocyte differentiation"/>
    <property type="evidence" value="ECO:0000250"/>
    <property type="project" value="UniProtKB"/>
</dbReference>
<dbReference type="GO" id="GO:0032466">
    <property type="term" value="P:negative regulation of cytokinesis"/>
    <property type="evidence" value="ECO:0000250"/>
    <property type="project" value="UniProtKB"/>
</dbReference>
<dbReference type="GO" id="GO:0000122">
    <property type="term" value="P:negative regulation of transcription by RNA polymerase II"/>
    <property type="evidence" value="ECO:0000250"/>
    <property type="project" value="UniProtKB"/>
</dbReference>
<dbReference type="GO" id="GO:0001890">
    <property type="term" value="P:placenta development"/>
    <property type="evidence" value="ECO:0000250"/>
    <property type="project" value="UniProtKB"/>
</dbReference>
<dbReference type="GO" id="GO:0032877">
    <property type="term" value="P:positive regulation of DNA endoreduplication"/>
    <property type="evidence" value="ECO:0000250"/>
    <property type="project" value="UniProtKB"/>
</dbReference>
<dbReference type="GO" id="GO:0045944">
    <property type="term" value="P:positive regulation of transcription by RNA polymerase II"/>
    <property type="evidence" value="ECO:0000266"/>
    <property type="project" value="RGD"/>
</dbReference>
<dbReference type="GO" id="GO:0006357">
    <property type="term" value="P:regulation of transcription by RNA polymerase II"/>
    <property type="evidence" value="ECO:0000318"/>
    <property type="project" value="GO_Central"/>
</dbReference>
<dbReference type="GO" id="GO:0002040">
    <property type="term" value="P:sprouting angiogenesis"/>
    <property type="evidence" value="ECO:0000250"/>
    <property type="project" value="UniProtKB"/>
</dbReference>
<dbReference type="GO" id="GO:0060707">
    <property type="term" value="P:trophoblast giant cell differentiation"/>
    <property type="evidence" value="ECO:0000250"/>
    <property type="project" value="UniProtKB"/>
</dbReference>
<dbReference type="FunFam" id="1.10.10.10:FF:000073">
    <property type="entry name" value="E2F transcription factor 8"/>
    <property type="match status" value="1"/>
</dbReference>
<dbReference type="FunFam" id="1.10.10.10:FF:000100">
    <property type="entry name" value="E2F transcription factor 8"/>
    <property type="match status" value="1"/>
</dbReference>
<dbReference type="Gene3D" id="1.10.10.10">
    <property type="entry name" value="Winged helix-like DNA-binding domain superfamily/Winged helix DNA-binding domain"/>
    <property type="match status" value="2"/>
</dbReference>
<dbReference type="InterPro" id="IPR015633">
    <property type="entry name" value="E2F"/>
</dbReference>
<dbReference type="InterPro" id="IPR003316">
    <property type="entry name" value="E2F_WHTH_DNA-bd_dom"/>
</dbReference>
<dbReference type="InterPro" id="IPR036388">
    <property type="entry name" value="WH-like_DNA-bd_sf"/>
</dbReference>
<dbReference type="InterPro" id="IPR036390">
    <property type="entry name" value="WH_DNA-bd_sf"/>
</dbReference>
<dbReference type="PANTHER" id="PTHR12081">
    <property type="entry name" value="TRANSCRIPTION FACTOR E2F"/>
    <property type="match status" value="1"/>
</dbReference>
<dbReference type="PANTHER" id="PTHR12081:SF40">
    <property type="entry name" value="TRANSCRIPTION FACTOR E2F8"/>
    <property type="match status" value="1"/>
</dbReference>
<dbReference type="Pfam" id="PF02319">
    <property type="entry name" value="E2F_TDP"/>
    <property type="match status" value="2"/>
</dbReference>
<dbReference type="SMART" id="SM01372">
    <property type="entry name" value="E2F_TDP"/>
    <property type="match status" value="2"/>
</dbReference>
<dbReference type="SUPFAM" id="SSF46785">
    <property type="entry name" value="Winged helix' DNA-binding domain"/>
    <property type="match status" value="2"/>
</dbReference>
<comment type="function">
    <text evidence="1">Atypical E2F transcription factor that participates in various processes such as angiogenesis and polyploidization of specialized cells. Mainly acts as a transcription repressor that binds DNA independently of DP proteins and specifically recognizes the E2 recognition site 5'-TTTC[CG]CGC-3'. Directly represses transcription of classical E2F transcription factors such as E2F1: component of a feedback loop in S phase by repressing the expression of E2F1, thereby preventing p53/TP53-dependent apoptosis. Plays a key role in polyploidization of cells in placenta and liver by regulating the endocycle, probably by repressing genes promoting cytokinesis and antagonizing action of classical E2F proteins (E2F1, E2F2 and/or E2F3). Required for placental development by promoting polyploidization of trophoblast giant cells. Acts as a promoter of sprouting angiogenesis, possibly by acting as a transcription activator: associates with HIF1A, recognizes and binds the VEGFA promoter, which is different from canonical E2 recognition site, and activates expression of the VEGFA gene (By similarity).</text>
</comment>
<comment type="subunit">
    <text evidence="1">Homodimer and heterodimer: mainly forms homodimers and, to a lesser extent, heterodimers with E2F8. Dimerization is important for DNA-binding. Interacts with HIF1A (By similarity).</text>
</comment>
<comment type="subcellular location">
    <subcellularLocation>
        <location evidence="1">Nucleus</location>
    </subcellularLocation>
</comment>
<comment type="alternative products">
    <event type="alternative splicing"/>
    <isoform>
        <id>F1LMN3-1</id>
        <name>1</name>
        <sequence type="displayed"/>
    </isoform>
    <isoform>
        <id>F1LMN3-2</id>
        <name>2</name>
        <sequence type="described" ref="VSP_044620 VSP_044621"/>
    </isoform>
</comment>
<comment type="domain">
    <text evidence="1">In contrast to classical members of the E2F transcription factor, atypical members contain 2 DNA-binding domains and regulate transcription in a DP-independent manner. Both DNA-binding domains are required for DNA-binding and are proposed to form an intramolecular structure that is similar to the winged helix structure of the E2F-DP heterodimer (By similarity).</text>
</comment>
<comment type="similarity">
    <text evidence="6">Belongs to the E2F/DP family.</text>
</comment>
<sequence length="860" mass="93023">MENQKENLFSEPHKRGLVKSPLQESSKANVVLAEIQPDLGPLTTPTKPKEVSQGEPWTPTANLKMLISAVSPEIRSRDQKRGLSDNRSGLPEARDCLHEPQAKTNEKSQPSRKEKSLGLLCHKFLARYPKYPNPAVNNDICLDEVAEELDVERRRIYDIVNVLESLHMVSRLAKNRYTWHGRHNLTKTLGTLKSVGEENKYAEQIMMIKRKEHEQEFDFIKSCGLEDHHVIKSTAGQNGHSDMCFVELPGVEFRAASANSRKDKSLRVMSQKFVMLFLVSTPQIVSLEIAAKILIGEDHVEDLDKSKFKTKIRRLYDIANVLSSLDLIKKVHVTEERGRKPAFKWTGPEISPNNSGSSPVMPLTASLEAEQSAKENCAKNLFSTRGKPSFTRHPSLIKLVKSIENDRRKISSAPSSPVKSSKAESSQNSPPVPNKMAQLAAICKMQLEEQSSEPRKRVKVNLTRSGHYKPLAPLDPAVNTELELLAPSLIQPLGMVPLIPSPLSSAVPVILPQAPSGPSYAIYLQPAQAQMLTPPHGLSPTVCPTQSSNATGSKDPTDAPTEKTATDATKPGSLQPAPERQGAKNRSKETTGDRGTKRTGALEDGGPGPIKKPKEDLKALENVPTPTTLFPSGYLIPLTQCPSLGPDPMLSNTENSGTLSPNHRIYGSPIAGVIPVASSELTAVNFPPFHVTPLKLMVSPTSMAAVPVGNSPALSSSHPAPTQNPSSAIVNFTLQHLGLISPGVQMSASPGPGAGTVPLSPRVEADNLSSRQGRATIHDSPVLGQSQLNGQPVAGTGAQQPVPVTPKGSQLVAESFFRTPGGPTKPTSSSFMDFDGANKTSFGTLFVPQRKLEVSTEDVH</sequence>
<reference key="1">
    <citation type="journal article" date="2004" name="Nature">
        <title>Genome sequence of the Brown Norway rat yields insights into mammalian evolution.</title>
        <authorList>
            <person name="Gibbs R.A."/>
            <person name="Weinstock G.M."/>
            <person name="Metzker M.L."/>
            <person name="Muzny D.M."/>
            <person name="Sodergren E.J."/>
            <person name="Scherer S."/>
            <person name="Scott G."/>
            <person name="Steffen D."/>
            <person name="Worley K.C."/>
            <person name="Burch P.E."/>
            <person name="Okwuonu G."/>
            <person name="Hines S."/>
            <person name="Lewis L."/>
            <person name="Deramo C."/>
            <person name="Delgado O."/>
            <person name="Dugan-Rocha S."/>
            <person name="Miner G."/>
            <person name="Morgan M."/>
            <person name="Hawes A."/>
            <person name="Gill R."/>
            <person name="Holt R.A."/>
            <person name="Adams M.D."/>
            <person name="Amanatides P.G."/>
            <person name="Baden-Tillson H."/>
            <person name="Barnstead M."/>
            <person name="Chin S."/>
            <person name="Evans C.A."/>
            <person name="Ferriera S."/>
            <person name="Fosler C."/>
            <person name="Glodek A."/>
            <person name="Gu Z."/>
            <person name="Jennings D."/>
            <person name="Kraft C.L."/>
            <person name="Nguyen T."/>
            <person name="Pfannkoch C.M."/>
            <person name="Sitter C."/>
            <person name="Sutton G.G."/>
            <person name="Venter J.C."/>
            <person name="Woodage T."/>
            <person name="Smith D."/>
            <person name="Lee H.-M."/>
            <person name="Gustafson E."/>
            <person name="Cahill P."/>
            <person name="Kana A."/>
            <person name="Doucette-Stamm L."/>
            <person name="Weinstock K."/>
            <person name="Fechtel K."/>
            <person name="Weiss R.B."/>
            <person name="Dunn D.M."/>
            <person name="Green E.D."/>
            <person name="Blakesley R.W."/>
            <person name="Bouffard G.G."/>
            <person name="De Jong P.J."/>
            <person name="Osoegawa K."/>
            <person name="Zhu B."/>
            <person name="Marra M."/>
            <person name="Schein J."/>
            <person name="Bosdet I."/>
            <person name="Fjell C."/>
            <person name="Jones S."/>
            <person name="Krzywinski M."/>
            <person name="Mathewson C."/>
            <person name="Siddiqui A."/>
            <person name="Wye N."/>
            <person name="McPherson J."/>
            <person name="Zhao S."/>
            <person name="Fraser C.M."/>
            <person name="Shetty J."/>
            <person name="Shatsman S."/>
            <person name="Geer K."/>
            <person name="Chen Y."/>
            <person name="Abramzon S."/>
            <person name="Nierman W.C."/>
            <person name="Havlak P.H."/>
            <person name="Chen R."/>
            <person name="Durbin K.J."/>
            <person name="Egan A."/>
            <person name="Ren Y."/>
            <person name="Song X.-Z."/>
            <person name="Li B."/>
            <person name="Liu Y."/>
            <person name="Qin X."/>
            <person name="Cawley S."/>
            <person name="Cooney A.J."/>
            <person name="D'Souza L.M."/>
            <person name="Martin K."/>
            <person name="Wu J.Q."/>
            <person name="Gonzalez-Garay M.L."/>
            <person name="Jackson A.R."/>
            <person name="Kalafus K.J."/>
            <person name="McLeod M.P."/>
            <person name="Milosavljevic A."/>
            <person name="Virk D."/>
            <person name="Volkov A."/>
            <person name="Wheeler D.A."/>
            <person name="Zhang Z."/>
            <person name="Bailey J.A."/>
            <person name="Eichler E.E."/>
            <person name="Tuzun E."/>
            <person name="Birney E."/>
            <person name="Mongin E."/>
            <person name="Ureta-Vidal A."/>
            <person name="Woodwark C."/>
            <person name="Zdobnov E."/>
            <person name="Bork P."/>
            <person name="Suyama M."/>
            <person name="Torrents D."/>
            <person name="Alexandersson M."/>
            <person name="Trask B.J."/>
            <person name="Young J.M."/>
            <person name="Huang H."/>
            <person name="Wang H."/>
            <person name="Xing H."/>
            <person name="Daniels S."/>
            <person name="Gietzen D."/>
            <person name="Schmidt J."/>
            <person name="Stevens K."/>
            <person name="Vitt U."/>
            <person name="Wingrove J."/>
            <person name="Camara F."/>
            <person name="Mar Alba M."/>
            <person name="Abril J.F."/>
            <person name="Guigo R."/>
            <person name="Smit A."/>
            <person name="Dubchak I."/>
            <person name="Rubin E.M."/>
            <person name="Couronne O."/>
            <person name="Poliakov A."/>
            <person name="Huebner N."/>
            <person name="Ganten D."/>
            <person name="Goesele C."/>
            <person name="Hummel O."/>
            <person name="Kreitler T."/>
            <person name="Lee Y.-A."/>
            <person name="Monti J."/>
            <person name="Schulz H."/>
            <person name="Zimdahl H."/>
            <person name="Himmelbauer H."/>
            <person name="Lehrach H."/>
            <person name="Jacob H.J."/>
            <person name="Bromberg S."/>
            <person name="Gullings-Handley J."/>
            <person name="Jensen-Seaman M.I."/>
            <person name="Kwitek A.E."/>
            <person name="Lazar J."/>
            <person name="Pasko D."/>
            <person name="Tonellato P.J."/>
            <person name="Twigger S."/>
            <person name="Ponting C.P."/>
            <person name="Duarte J.M."/>
            <person name="Rice S."/>
            <person name="Goodstadt L."/>
            <person name="Beatson S.A."/>
            <person name="Emes R.D."/>
            <person name="Winter E.E."/>
            <person name="Webber C."/>
            <person name="Brandt P."/>
            <person name="Nyakatura G."/>
            <person name="Adetobi M."/>
            <person name="Chiaromonte F."/>
            <person name="Elnitski L."/>
            <person name="Eswara P."/>
            <person name="Hardison R.C."/>
            <person name="Hou M."/>
            <person name="Kolbe D."/>
            <person name="Makova K."/>
            <person name="Miller W."/>
            <person name="Nekrutenko A."/>
            <person name="Riemer C."/>
            <person name="Schwartz S."/>
            <person name="Taylor J."/>
            <person name="Yang S."/>
            <person name="Zhang Y."/>
            <person name="Lindpaintner K."/>
            <person name="Andrews T.D."/>
            <person name="Caccamo M."/>
            <person name="Clamp M."/>
            <person name="Clarke L."/>
            <person name="Curwen V."/>
            <person name="Durbin R.M."/>
            <person name="Eyras E."/>
            <person name="Searle S.M."/>
            <person name="Cooper G.M."/>
            <person name="Batzoglou S."/>
            <person name="Brudno M."/>
            <person name="Sidow A."/>
            <person name="Stone E.A."/>
            <person name="Payseur B.A."/>
            <person name="Bourque G."/>
            <person name="Lopez-Otin C."/>
            <person name="Puente X.S."/>
            <person name="Chakrabarti K."/>
            <person name="Chatterji S."/>
            <person name="Dewey C."/>
            <person name="Pachter L."/>
            <person name="Bray N."/>
            <person name="Yap V.B."/>
            <person name="Caspi A."/>
            <person name="Tesler G."/>
            <person name="Pevzner P.A."/>
            <person name="Haussler D."/>
            <person name="Roskin K.M."/>
            <person name="Baertsch R."/>
            <person name="Clawson H."/>
            <person name="Furey T.S."/>
            <person name="Hinrichs A.S."/>
            <person name="Karolchik D."/>
            <person name="Kent W.J."/>
            <person name="Rosenbloom K.R."/>
            <person name="Trumbower H."/>
            <person name="Weirauch M."/>
            <person name="Cooper D.N."/>
            <person name="Stenson P.D."/>
            <person name="Ma B."/>
            <person name="Brent M."/>
            <person name="Arumugam M."/>
            <person name="Shteynberg D."/>
            <person name="Copley R.R."/>
            <person name="Taylor M.S."/>
            <person name="Riethman H."/>
            <person name="Mudunuri U."/>
            <person name="Peterson J."/>
            <person name="Guyer M."/>
            <person name="Felsenfeld A."/>
            <person name="Old S."/>
            <person name="Mockrin S."/>
            <person name="Collins F.S."/>
        </authorList>
    </citation>
    <scope>NUCLEOTIDE SEQUENCE [LARGE SCALE GENOMIC DNA]</scope>
    <source>
        <strain>Brown Norway</strain>
    </source>
</reference>
<reference key="2">
    <citation type="journal article" date="2004" name="Genome Res.">
        <title>The status, quality, and expansion of the NIH full-length cDNA project: the Mammalian Gene Collection (MGC).</title>
        <authorList>
            <consortium name="The MGC Project Team"/>
        </authorList>
    </citation>
    <scope>NUCLEOTIDE SEQUENCE [LARGE SCALE MRNA] OF 271-860 (ISOFORM 2)</scope>
    <source>
        <tissue>Placenta</tissue>
    </source>
</reference>
<reference key="3">
    <citation type="journal article" date="2012" name="Nat. Commun.">
        <title>Quantitative maps of protein phosphorylation sites across 14 different rat organs and tissues.</title>
        <authorList>
            <person name="Lundby A."/>
            <person name="Secher A."/>
            <person name="Lage K."/>
            <person name="Nordsborg N.B."/>
            <person name="Dmytriyev A."/>
            <person name="Lundby C."/>
            <person name="Olsen J.V."/>
        </authorList>
    </citation>
    <scope>PHOSPHORYLATION [LARGE SCALE ANALYSIS] AT SER-71</scope>
    <scope>IDENTIFICATION BY MASS SPECTROMETRY [LARGE SCALE ANALYSIS]</scope>
</reference>
<name>E2F8_RAT</name>
<protein>
    <recommendedName>
        <fullName>Transcription factor E2F8</fullName>
        <shortName>E2F-8</shortName>
    </recommendedName>
</protein>
<organism>
    <name type="scientific">Rattus norvegicus</name>
    <name type="common">Rat</name>
    <dbReference type="NCBI Taxonomy" id="10116"/>
    <lineage>
        <taxon>Eukaryota</taxon>
        <taxon>Metazoa</taxon>
        <taxon>Chordata</taxon>
        <taxon>Craniata</taxon>
        <taxon>Vertebrata</taxon>
        <taxon>Euteleostomi</taxon>
        <taxon>Mammalia</taxon>
        <taxon>Eutheria</taxon>
        <taxon>Euarchontoglires</taxon>
        <taxon>Glires</taxon>
        <taxon>Rodentia</taxon>
        <taxon>Myomorpha</taxon>
        <taxon>Muroidea</taxon>
        <taxon>Muridae</taxon>
        <taxon>Murinae</taxon>
        <taxon>Rattus</taxon>
    </lineage>
</organism>
<gene>
    <name type="primary">E2f8</name>
</gene>
<evidence type="ECO:0000250" key="1"/>
<evidence type="ECO:0000250" key="2">
    <source>
        <dbReference type="UniProtKB" id="A0AVK6"/>
    </source>
</evidence>
<evidence type="ECO:0000255" key="3"/>
<evidence type="ECO:0000256" key="4">
    <source>
        <dbReference type="SAM" id="MobiDB-lite"/>
    </source>
</evidence>
<evidence type="ECO:0000303" key="5">
    <source>
    </source>
</evidence>
<evidence type="ECO:0000305" key="6"/>
<evidence type="ECO:0007744" key="7">
    <source>
    </source>
</evidence>
<keyword id="KW-0010">Activator</keyword>
<keyword id="KW-0025">Alternative splicing</keyword>
<keyword id="KW-0131">Cell cycle</keyword>
<keyword id="KW-0238">DNA-binding</keyword>
<keyword id="KW-0539">Nucleus</keyword>
<keyword id="KW-0597">Phosphoprotein</keyword>
<keyword id="KW-1185">Reference proteome</keyword>
<keyword id="KW-0678">Repressor</keyword>
<keyword id="KW-0804">Transcription</keyword>
<keyword id="KW-0805">Transcription regulation</keyword>